<proteinExistence type="inferred from homology"/>
<accession>Q5HWA6</accession>
<keyword id="KW-0064">Aspartyl protease</keyword>
<keyword id="KW-0997">Cell inner membrane</keyword>
<keyword id="KW-1003">Cell membrane</keyword>
<keyword id="KW-0378">Hydrolase</keyword>
<keyword id="KW-0472">Membrane</keyword>
<keyword id="KW-0645">Protease</keyword>
<keyword id="KW-0812">Transmembrane</keyword>
<keyword id="KW-1133">Transmembrane helix</keyword>
<sequence>MAKTFKFIFYFWGAFVLVFALDQWVKSLTLAGFRWQSEYLDLTYALNTGVAFSMLSFLEHNLKYLHLALIGVLFIYLFWQRTLLKTHSIAFGMMLGAGVSNLLDRFIHGGVVDMFFWHKWFNFAIFNVADVMINISVALILIQEIFKKRKKDDRMD</sequence>
<comment type="function">
    <text evidence="1">This protein specifically catalyzes the removal of signal peptides from prolipoproteins.</text>
</comment>
<comment type="catalytic activity">
    <reaction evidence="1">
        <text>Release of signal peptides from bacterial membrane prolipoproteins. Hydrolyzes -Xaa-Yaa-Zaa-|-(S,diacylglyceryl)Cys-, in which Xaa is hydrophobic (preferably Leu), and Yaa (Ala or Ser) and Zaa (Gly or Ala) have small, neutral side chains.</text>
        <dbReference type="EC" id="3.4.23.36"/>
    </reaction>
</comment>
<comment type="pathway">
    <text evidence="1">Protein modification; lipoprotein biosynthesis (signal peptide cleavage).</text>
</comment>
<comment type="subcellular location">
    <subcellularLocation>
        <location evidence="1">Cell inner membrane</location>
        <topology evidence="1">Multi-pass membrane protein</topology>
    </subcellularLocation>
</comment>
<comment type="similarity">
    <text evidence="1">Belongs to the peptidase A8 family.</text>
</comment>
<protein>
    <recommendedName>
        <fullName evidence="1">Lipoprotein signal peptidase</fullName>
        <ecNumber evidence="1">3.4.23.36</ecNumber>
    </recommendedName>
    <alternativeName>
        <fullName evidence="1">Prolipoprotein signal peptidase</fullName>
    </alternativeName>
    <alternativeName>
        <fullName evidence="1">Signal peptidase II</fullName>
        <shortName evidence="1">SPase II</shortName>
    </alternativeName>
</protein>
<evidence type="ECO:0000255" key="1">
    <source>
        <dbReference type="HAMAP-Rule" id="MF_00161"/>
    </source>
</evidence>
<dbReference type="EC" id="3.4.23.36" evidence="1"/>
<dbReference type="EMBL" id="CP000025">
    <property type="protein sequence ID" value="AAW34999.1"/>
    <property type="molecule type" value="Genomic_DNA"/>
</dbReference>
<dbReference type="PIR" id="G81378">
    <property type="entry name" value="G81378"/>
</dbReference>
<dbReference type="RefSeq" id="WP_002858678.1">
    <property type="nucleotide sequence ID" value="NC_003912.7"/>
</dbReference>
<dbReference type="SMR" id="Q5HWA6"/>
<dbReference type="KEGG" id="cjr:CJE0410"/>
<dbReference type="HOGENOM" id="CLU_083252_4_3_7"/>
<dbReference type="UniPathway" id="UPA00665"/>
<dbReference type="GO" id="GO:0005886">
    <property type="term" value="C:plasma membrane"/>
    <property type="evidence" value="ECO:0007669"/>
    <property type="project" value="UniProtKB-SubCell"/>
</dbReference>
<dbReference type="GO" id="GO:0004190">
    <property type="term" value="F:aspartic-type endopeptidase activity"/>
    <property type="evidence" value="ECO:0007669"/>
    <property type="project" value="UniProtKB-UniRule"/>
</dbReference>
<dbReference type="GO" id="GO:0006508">
    <property type="term" value="P:proteolysis"/>
    <property type="evidence" value="ECO:0007669"/>
    <property type="project" value="UniProtKB-KW"/>
</dbReference>
<dbReference type="HAMAP" id="MF_00161">
    <property type="entry name" value="LspA"/>
    <property type="match status" value="1"/>
</dbReference>
<dbReference type="InterPro" id="IPR001872">
    <property type="entry name" value="Peptidase_A8"/>
</dbReference>
<dbReference type="NCBIfam" id="TIGR00077">
    <property type="entry name" value="lspA"/>
    <property type="match status" value="1"/>
</dbReference>
<dbReference type="PANTHER" id="PTHR33695">
    <property type="entry name" value="LIPOPROTEIN SIGNAL PEPTIDASE"/>
    <property type="match status" value="1"/>
</dbReference>
<dbReference type="PANTHER" id="PTHR33695:SF1">
    <property type="entry name" value="LIPOPROTEIN SIGNAL PEPTIDASE"/>
    <property type="match status" value="1"/>
</dbReference>
<dbReference type="Pfam" id="PF01252">
    <property type="entry name" value="Peptidase_A8"/>
    <property type="match status" value="1"/>
</dbReference>
<dbReference type="PRINTS" id="PR00781">
    <property type="entry name" value="LIPOSIGPTASE"/>
</dbReference>
<dbReference type="PROSITE" id="PS00855">
    <property type="entry name" value="SPASE_II"/>
    <property type="match status" value="1"/>
</dbReference>
<name>LSPA_CAMJR</name>
<organism>
    <name type="scientific">Campylobacter jejuni (strain RM1221)</name>
    <dbReference type="NCBI Taxonomy" id="195099"/>
    <lineage>
        <taxon>Bacteria</taxon>
        <taxon>Pseudomonadati</taxon>
        <taxon>Campylobacterota</taxon>
        <taxon>Epsilonproteobacteria</taxon>
        <taxon>Campylobacterales</taxon>
        <taxon>Campylobacteraceae</taxon>
        <taxon>Campylobacter</taxon>
    </lineage>
</organism>
<gene>
    <name evidence="1" type="primary">lspA</name>
    <name type="ordered locus">CJE0410</name>
</gene>
<feature type="chain" id="PRO_1000097245" description="Lipoprotein signal peptidase">
    <location>
        <begin position="1"/>
        <end position="156"/>
    </location>
</feature>
<feature type="transmembrane region" description="Helical" evidence="1">
    <location>
        <begin position="5"/>
        <end position="25"/>
    </location>
</feature>
<feature type="transmembrane region" description="Helical" evidence="1">
    <location>
        <begin position="64"/>
        <end position="84"/>
    </location>
</feature>
<feature type="transmembrane region" description="Helical" evidence="1">
    <location>
        <begin position="89"/>
        <end position="109"/>
    </location>
</feature>
<feature type="transmembrane region" description="Helical" evidence="1">
    <location>
        <begin position="122"/>
        <end position="142"/>
    </location>
</feature>
<feature type="active site" evidence="1">
    <location>
        <position position="113"/>
    </location>
</feature>
<feature type="active site" evidence="1">
    <location>
        <position position="130"/>
    </location>
</feature>
<reference key="1">
    <citation type="journal article" date="2005" name="PLoS Biol.">
        <title>Major structural differences and novel potential virulence mechanisms from the genomes of multiple Campylobacter species.</title>
        <authorList>
            <person name="Fouts D.E."/>
            <person name="Mongodin E.F."/>
            <person name="Mandrell R.E."/>
            <person name="Miller W.G."/>
            <person name="Rasko D.A."/>
            <person name="Ravel J."/>
            <person name="Brinkac L.M."/>
            <person name="DeBoy R.T."/>
            <person name="Parker C.T."/>
            <person name="Daugherty S.C."/>
            <person name="Dodson R.J."/>
            <person name="Durkin A.S."/>
            <person name="Madupu R."/>
            <person name="Sullivan S.A."/>
            <person name="Shetty J.U."/>
            <person name="Ayodeji M.A."/>
            <person name="Shvartsbeyn A."/>
            <person name="Schatz M.C."/>
            <person name="Badger J.H."/>
            <person name="Fraser C.M."/>
            <person name="Nelson K.E."/>
        </authorList>
    </citation>
    <scope>NUCLEOTIDE SEQUENCE [LARGE SCALE GENOMIC DNA]</scope>
    <source>
        <strain>RM1221</strain>
    </source>
</reference>